<evidence type="ECO:0000255" key="1">
    <source>
        <dbReference type="HAMAP-Rule" id="MF_01025"/>
    </source>
</evidence>
<protein>
    <recommendedName>
        <fullName evidence="1">2-isopropylmalate synthase</fullName>
        <ecNumber evidence="1">2.3.3.13</ecNumber>
    </recommendedName>
    <alternativeName>
        <fullName evidence="1">Alpha-IPM synthase</fullName>
    </alternativeName>
    <alternativeName>
        <fullName evidence="1">Alpha-isopropylmalate synthase</fullName>
    </alternativeName>
</protein>
<proteinExistence type="inferred from homology"/>
<sequence length="523" mass="57256">MSQQVIIFDTTLRDGEQALQASLSAKEKLQIALALERMGVDVMEVGFPVSSPGDFESVQTIARQVKNSRVCALARCVEKDIDVAAESLKVAEAFRIHTFIATSPMHIATKLRSTLDEVIERAIYMVKRARNYTDDVEFSCEDAGRTPIADLARVVEAAINAGATTINIPDTVGYTMPFEFAGIISGLYERVPNIDKAIISVHTHDDLGLAVGNSLAAVHAGARQVEGAMNGIGERAGNCSLEEVIMAIKVRKDILNVHTAINHQEIWRTSQLVSQICNMPIPANKAIVGSGAFAHSSGIHQDGVLKNRENYEIMTPESIGLNQIQLNLTSRSGRAAVKHRMDEMGYKESEYNLDNLYDAFLKLADKKGQVFDYDLEALAFIGKQQEEPEHFRLDYFSVQSGSNDIATAAVKLACGEEVKAEAANGNGPVDAVYQAINRITDYNVELVKYSLTAKGHGKDALGQVDIVANYNGRRFHGVGLATDIVESSAKAMVHVLNNIWRAAEVEKELQRKAQHNENNKETV</sequence>
<feature type="chain" id="PRO_1000149202" description="2-isopropylmalate synthase">
    <location>
        <begin position="1"/>
        <end position="523"/>
    </location>
</feature>
<feature type="domain" description="Pyruvate carboxyltransferase" evidence="1">
    <location>
        <begin position="5"/>
        <end position="267"/>
    </location>
</feature>
<feature type="region of interest" description="Regulatory domain" evidence="1">
    <location>
        <begin position="392"/>
        <end position="523"/>
    </location>
</feature>
<feature type="binding site" evidence="1">
    <location>
        <position position="14"/>
    </location>
    <ligand>
        <name>Mn(2+)</name>
        <dbReference type="ChEBI" id="CHEBI:29035"/>
    </ligand>
</feature>
<feature type="binding site" evidence="1">
    <location>
        <position position="202"/>
    </location>
    <ligand>
        <name>Mn(2+)</name>
        <dbReference type="ChEBI" id="CHEBI:29035"/>
    </ligand>
</feature>
<feature type="binding site" evidence="1">
    <location>
        <position position="204"/>
    </location>
    <ligand>
        <name>Mn(2+)</name>
        <dbReference type="ChEBI" id="CHEBI:29035"/>
    </ligand>
</feature>
<feature type="binding site" evidence="1">
    <location>
        <position position="238"/>
    </location>
    <ligand>
        <name>Mn(2+)</name>
        <dbReference type="ChEBI" id="CHEBI:29035"/>
    </ligand>
</feature>
<dbReference type="EC" id="2.3.3.13" evidence="1"/>
<dbReference type="EMBL" id="CU928158">
    <property type="protein sequence ID" value="CAQ87681.1"/>
    <property type="molecule type" value="Genomic_DNA"/>
</dbReference>
<dbReference type="RefSeq" id="WP_000082807.1">
    <property type="nucleotide sequence ID" value="NC_011740.1"/>
</dbReference>
<dbReference type="SMR" id="B7LWE2"/>
<dbReference type="GeneID" id="75058817"/>
<dbReference type="KEGG" id="efe:EFER_0096"/>
<dbReference type="HOGENOM" id="CLU_022158_0_1_6"/>
<dbReference type="OrthoDB" id="9803573at2"/>
<dbReference type="UniPathway" id="UPA00048">
    <property type="reaction ID" value="UER00070"/>
</dbReference>
<dbReference type="Proteomes" id="UP000000745">
    <property type="component" value="Chromosome"/>
</dbReference>
<dbReference type="GO" id="GO:0005829">
    <property type="term" value="C:cytosol"/>
    <property type="evidence" value="ECO:0007669"/>
    <property type="project" value="TreeGrafter"/>
</dbReference>
<dbReference type="GO" id="GO:0003852">
    <property type="term" value="F:2-isopropylmalate synthase activity"/>
    <property type="evidence" value="ECO:0007669"/>
    <property type="project" value="UniProtKB-UniRule"/>
</dbReference>
<dbReference type="GO" id="GO:0003985">
    <property type="term" value="F:acetyl-CoA C-acetyltransferase activity"/>
    <property type="evidence" value="ECO:0007669"/>
    <property type="project" value="UniProtKB-UniRule"/>
</dbReference>
<dbReference type="GO" id="GO:0030145">
    <property type="term" value="F:manganese ion binding"/>
    <property type="evidence" value="ECO:0007669"/>
    <property type="project" value="UniProtKB-UniRule"/>
</dbReference>
<dbReference type="GO" id="GO:0009098">
    <property type="term" value="P:L-leucine biosynthetic process"/>
    <property type="evidence" value="ECO:0007669"/>
    <property type="project" value="UniProtKB-UniRule"/>
</dbReference>
<dbReference type="CDD" id="cd07940">
    <property type="entry name" value="DRE_TIM_IPMS"/>
    <property type="match status" value="1"/>
</dbReference>
<dbReference type="FunFam" id="1.10.238.260:FF:000001">
    <property type="entry name" value="2-isopropylmalate synthase"/>
    <property type="match status" value="1"/>
</dbReference>
<dbReference type="FunFam" id="3.20.20.70:FF:000010">
    <property type="entry name" value="2-isopropylmalate synthase"/>
    <property type="match status" value="1"/>
</dbReference>
<dbReference type="FunFam" id="3.30.160.270:FF:000001">
    <property type="entry name" value="2-isopropylmalate synthase"/>
    <property type="match status" value="1"/>
</dbReference>
<dbReference type="Gene3D" id="1.10.238.260">
    <property type="match status" value="1"/>
</dbReference>
<dbReference type="Gene3D" id="3.30.160.270">
    <property type="match status" value="1"/>
</dbReference>
<dbReference type="Gene3D" id="3.20.20.70">
    <property type="entry name" value="Aldolase class I"/>
    <property type="match status" value="1"/>
</dbReference>
<dbReference type="HAMAP" id="MF_01025">
    <property type="entry name" value="LeuA_type1"/>
    <property type="match status" value="1"/>
</dbReference>
<dbReference type="InterPro" id="IPR050073">
    <property type="entry name" value="2-IPM_HCS-like"/>
</dbReference>
<dbReference type="InterPro" id="IPR013709">
    <property type="entry name" value="2-isopropylmalate_synth_dimer"/>
</dbReference>
<dbReference type="InterPro" id="IPR002034">
    <property type="entry name" value="AIPM/Hcit_synth_CS"/>
</dbReference>
<dbReference type="InterPro" id="IPR013785">
    <property type="entry name" value="Aldolase_TIM"/>
</dbReference>
<dbReference type="InterPro" id="IPR054691">
    <property type="entry name" value="LeuA/HCS_post-cat"/>
</dbReference>
<dbReference type="InterPro" id="IPR036230">
    <property type="entry name" value="LeuA_allosteric_dom_sf"/>
</dbReference>
<dbReference type="InterPro" id="IPR005671">
    <property type="entry name" value="LeuA_bact_synth"/>
</dbReference>
<dbReference type="InterPro" id="IPR000891">
    <property type="entry name" value="PYR_CT"/>
</dbReference>
<dbReference type="NCBIfam" id="TIGR00973">
    <property type="entry name" value="leuA_bact"/>
    <property type="match status" value="1"/>
</dbReference>
<dbReference type="NCBIfam" id="NF002084">
    <property type="entry name" value="PRK00915.1-1"/>
    <property type="match status" value="1"/>
</dbReference>
<dbReference type="NCBIfam" id="NF002086">
    <property type="entry name" value="PRK00915.1-3"/>
    <property type="match status" value="1"/>
</dbReference>
<dbReference type="PANTHER" id="PTHR10277:SF9">
    <property type="entry name" value="2-ISOPROPYLMALATE SYNTHASE 1, CHLOROPLASTIC-RELATED"/>
    <property type="match status" value="1"/>
</dbReference>
<dbReference type="PANTHER" id="PTHR10277">
    <property type="entry name" value="HOMOCITRATE SYNTHASE-RELATED"/>
    <property type="match status" value="1"/>
</dbReference>
<dbReference type="Pfam" id="PF22617">
    <property type="entry name" value="HCS_D2"/>
    <property type="match status" value="1"/>
</dbReference>
<dbReference type="Pfam" id="PF00682">
    <property type="entry name" value="HMGL-like"/>
    <property type="match status" value="1"/>
</dbReference>
<dbReference type="Pfam" id="PF08502">
    <property type="entry name" value="LeuA_dimer"/>
    <property type="match status" value="1"/>
</dbReference>
<dbReference type="SMART" id="SM00917">
    <property type="entry name" value="LeuA_dimer"/>
    <property type="match status" value="1"/>
</dbReference>
<dbReference type="SUPFAM" id="SSF110921">
    <property type="entry name" value="2-isopropylmalate synthase LeuA, allosteric (dimerisation) domain"/>
    <property type="match status" value="1"/>
</dbReference>
<dbReference type="SUPFAM" id="SSF51569">
    <property type="entry name" value="Aldolase"/>
    <property type="match status" value="1"/>
</dbReference>
<dbReference type="PROSITE" id="PS00815">
    <property type="entry name" value="AIPM_HOMOCIT_SYNTH_1"/>
    <property type="match status" value="1"/>
</dbReference>
<dbReference type="PROSITE" id="PS00816">
    <property type="entry name" value="AIPM_HOMOCIT_SYNTH_2"/>
    <property type="match status" value="1"/>
</dbReference>
<dbReference type="PROSITE" id="PS50991">
    <property type="entry name" value="PYR_CT"/>
    <property type="match status" value="1"/>
</dbReference>
<reference key="1">
    <citation type="journal article" date="2009" name="PLoS Genet.">
        <title>Organised genome dynamics in the Escherichia coli species results in highly diverse adaptive paths.</title>
        <authorList>
            <person name="Touchon M."/>
            <person name="Hoede C."/>
            <person name="Tenaillon O."/>
            <person name="Barbe V."/>
            <person name="Baeriswyl S."/>
            <person name="Bidet P."/>
            <person name="Bingen E."/>
            <person name="Bonacorsi S."/>
            <person name="Bouchier C."/>
            <person name="Bouvet O."/>
            <person name="Calteau A."/>
            <person name="Chiapello H."/>
            <person name="Clermont O."/>
            <person name="Cruveiller S."/>
            <person name="Danchin A."/>
            <person name="Diard M."/>
            <person name="Dossat C."/>
            <person name="Karoui M.E."/>
            <person name="Frapy E."/>
            <person name="Garry L."/>
            <person name="Ghigo J.M."/>
            <person name="Gilles A.M."/>
            <person name="Johnson J."/>
            <person name="Le Bouguenec C."/>
            <person name="Lescat M."/>
            <person name="Mangenot S."/>
            <person name="Martinez-Jehanne V."/>
            <person name="Matic I."/>
            <person name="Nassif X."/>
            <person name="Oztas S."/>
            <person name="Petit M.A."/>
            <person name="Pichon C."/>
            <person name="Rouy Z."/>
            <person name="Ruf C.S."/>
            <person name="Schneider D."/>
            <person name="Tourret J."/>
            <person name="Vacherie B."/>
            <person name="Vallenet D."/>
            <person name="Medigue C."/>
            <person name="Rocha E.P.C."/>
            <person name="Denamur E."/>
        </authorList>
    </citation>
    <scope>NUCLEOTIDE SEQUENCE [LARGE SCALE GENOMIC DNA]</scope>
    <source>
        <strain>ATCC 35469 / DSM 13698 / BCRC 15582 / CCUG 18766 / IAM 14443 / JCM 21226 / LMG 7866 / NBRC 102419 / NCTC 12128 / CDC 0568-73</strain>
    </source>
</reference>
<organism>
    <name type="scientific">Escherichia fergusonii (strain ATCC 35469 / DSM 13698 / CCUG 18766 / IAM 14443 / JCM 21226 / LMG 7866 / NBRC 102419 / NCTC 12128 / CDC 0568-73)</name>
    <dbReference type="NCBI Taxonomy" id="585054"/>
    <lineage>
        <taxon>Bacteria</taxon>
        <taxon>Pseudomonadati</taxon>
        <taxon>Pseudomonadota</taxon>
        <taxon>Gammaproteobacteria</taxon>
        <taxon>Enterobacterales</taxon>
        <taxon>Enterobacteriaceae</taxon>
        <taxon>Escherichia</taxon>
    </lineage>
</organism>
<name>LEU1_ESCF3</name>
<accession>B7LWE2</accession>
<keyword id="KW-0028">Amino-acid biosynthesis</keyword>
<keyword id="KW-0100">Branched-chain amino acid biosynthesis</keyword>
<keyword id="KW-0963">Cytoplasm</keyword>
<keyword id="KW-0432">Leucine biosynthesis</keyword>
<keyword id="KW-0464">Manganese</keyword>
<keyword id="KW-0479">Metal-binding</keyword>
<keyword id="KW-0808">Transferase</keyword>
<comment type="function">
    <text evidence="1">Catalyzes the condensation of the acetyl group of acetyl-CoA with 3-methyl-2-oxobutanoate (2-ketoisovalerate) to form 3-carboxy-3-hydroxy-4-methylpentanoate (2-isopropylmalate).</text>
</comment>
<comment type="catalytic activity">
    <reaction evidence="1">
        <text>3-methyl-2-oxobutanoate + acetyl-CoA + H2O = (2S)-2-isopropylmalate + CoA + H(+)</text>
        <dbReference type="Rhea" id="RHEA:21524"/>
        <dbReference type="ChEBI" id="CHEBI:1178"/>
        <dbReference type="ChEBI" id="CHEBI:11851"/>
        <dbReference type="ChEBI" id="CHEBI:15377"/>
        <dbReference type="ChEBI" id="CHEBI:15378"/>
        <dbReference type="ChEBI" id="CHEBI:57287"/>
        <dbReference type="ChEBI" id="CHEBI:57288"/>
        <dbReference type="EC" id="2.3.3.13"/>
    </reaction>
</comment>
<comment type="cofactor">
    <cofactor evidence="1">
        <name>Mn(2+)</name>
        <dbReference type="ChEBI" id="CHEBI:29035"/>
    </cofactor>
</comment>
<comment type="pathway">
    <text evidence="1">Amino-acid biosynthesis; L-leucine biosynthesis; L-leucine from 3-methyl-2-oxobutanoate: step 1/4.</text>
</comment>
<comment type="subunit">
    <text evidence="1">Homodimer.</text>
</comment>
<comment type="subcellular location">
    <subcellularLocation>
        <location evidence="1">Cytoplasm</location>
    </subcellularLocation>
</comment>
<comment type="similarity">
    <text evidence="1">Belongs to the alpha-IPM synthase/homocitrate synthase family. LeuA type 1 subfamily.</text>
</comment>
<gene>
    <name evidence="1" type="primary">leuA</name>
    <name type="ordered locus">EFER_0096</name>
</gene>